<comment type="function">
    <text evidence="4">Arginine methyltransferase that specifically catalyzes the formation of omega-N monomethylarginine (MMA). Has activity toward multiple substrates in vitro. Able to mediate the arginine methylation of histones and myelin basic protein (MBP) in vitro; the relevance of such results is however unclear in vivo.</text>
</comment>
<comment type="subunit">
    <text evidence="4">Present in large multiprotein complexes.</text>
</comment>
<comment type="interaction">
    <interactant intactId="EBI-16101095">
        <id>Q582G4</id>
    </interactant>
    <interactant intactId="EBI-16101095">
        <id>Q582G4</id>
        <label>PRMT7</label>
    </interactant>
    <organismsDiffer>false</organismsDiffer>
    <experiments>2</experiments>
</comment>
<comment type="interaction">
    <interactant intactId="EBI-16101095">
        <id>Q582G4</id>
    </interactant>
    <interactant intactId="EBI-302023">
        <id>P62805</id>
        <label>H4C9</label>
    </interactant>
    <organismsDiffer>true</organismsDiffer>
    <experiments>4</experiments>
</comment>
<comment type="subcellular location">
    <subcellularLocation>
        <location evidence="4">Cytoplasm</location>
    </subcellularLocation>
</comment>
<comment type="developmental stage">
    <text evidence="4">Expressed during both bloodstream (BF) and procyclic insect (PF) life cycle stages.</text>
</comment>
<comment type="similarity">
    <text evidence="2">Belongs to the class I-like SAM-binding methyltransferase superfamily. Protein arginine N-methyltransferase family. PRMT7 subfamily.</text>
</comment>
<comment type="caution">
    <text evidence="5">Compared to PRMT7 orthologs in other metazoans, it is shorter and lacks the C-terminal part.</text>
</comment>
<feature type="chain" id="PRO_0000373923" description="Protein arginine N-methyltransferase 7">
    <location>
        <begin position="1"/>
        <end position="390"/>
    </location>
</feature>
<feature type="domain" description="SAM-dependent MTase PRMT-type" evidence="2">
    <location>
        <begin position="55"/>
        <end position="372"/>
    </location>
</feature>
<feature type="region of interest" description="Disordered" evidence="3">
    <location>
        <begin position="1"/>
        <end position="20"/>
    </location>
</feature>
<feature type="compositionally biased region" description="Basic residues" evidence="3">
    <location>
        <begin position="1"/>
        <end position="11"/>
    </location>
</feature>
<feature type="active site" evidence="1">
    <location>
        <position position="172"/>
    </location>
</feature>
<feature type="active site" evidence="1">
    <location>
        <position position="181"/>
    </location>
</feature>
<feature type="helix" evidence="8">
    <location>
        <begin position="43"/>
        <end position="46"/>
    </location>
</feature>
<feature type="helix" evidence="8">
    <location>
        <begin position="55"/>
        <end position="58"/>
    </location>
</feature>
<feature type="helix" evidence="8">
    <location>
        <begin position="62"/>
        <end position="70"/>
    </location>
</feature>
<feature type="helix" evidence="8">
    <location>
        <begin position="72"/>
        <end position="76"/>
    </location>
</feature>
<feature type="helix" evidence="8">
    <location>
        <begin position="79"/>
        <end position="90"/>
    </location>
</feature>
<feature type="strand" evidence="8">
    <location>
        <begin position="98"/>
        <end position="102"/>
    </location>
</feature>
<feature type="helix" evidence="8">
    <location>
        <begin position="108"/>
        <end position="115"/>
    </location>
</feature>
<feature type="strand" evidence="8">
    <location>
        <begin position="119"/>
        <end position="126"/>
    </location>
</feature>
<feature type="helix" evidence="8">
    <location>
        <begin position="128"/>
        <end position="140"/>
    </location>
</feature>
<feature type="turn" evidence="8">
    <location>
        <begin position="144"/>
        <end position="146"/>
    </location>
</feature>
<feature type="strand" evidence="8">
    <location>
        <begin position="147"/>
        <end position="152"/>
    </location>
</feature>
<feature type="helix" evidence="8">
    <location>
        <begin position="154"/>
        <end position="156"/>
    </location>
</feature>
<feature type="helix" evidence="8">
    <location>
        <begin position="159"/>
        <end position="161"/>
    </location>
</feature>
<feature type="strand" evidence="8">
    <location>
        <begin position="162"/>
        <end position="164"/>
    </location>
</feature>
<feature type="strand" evidence="8">
    <location>
        <begin position="167"/>
        <end position="171"/>
    </location>
</feature>
<feature type="helix" evidence="8">
    <location>
        <begin position="183"/>
        <end position="193"/>
    </location>
</feature>
<feature type="strand" evidence="8">
    <location>
        <begin position="200"/>
        <end position="203"/>
    </location>
</feature>
<feature type="strand" evidence="8">
    <location>
        <begin position="205"/>
        <end position="214"/>
    </location>
</feature>
<feature type="helix" evidence="8">
    <location>
        <begin position="216"/>
        <end position="219"/>
    </location>
</feature>
<feature type="turn" evidence="8">
    <location>
        <begin position="220"/>
        <end position="222"/>
    </location>
</feature>
<feature type="helix" evidence="8">
    <location>
        <begin position="233"/>
        <end position="238"/>
    </location>
</feature>
<feature type="helix" evidence="8">
    <location>
        <begin position="247"/>
        <end position="250"/>
    </location>
</feature>
<feature type="helix" evidence="8">
    <location>
        <begin position="254"/>
        <end position="256"/>
    </location>
</feature>
<feature type="strand" evidence="8">
    <location>
        <begin position="266"/>
        <end position="272"/>
    </location>
</feature>
<feature type="turn" evidence="8">
    <location>
        <begin position="273"/>
        <end position="275"/>
    </location>
</feature>
<feature type="helix" evidence="8">
    <location>
        <begin position="278"/>
        <end position="280"/>
    </location>
</feature>
<feature type="strand" evidence="8">
    <location>
        <begin position="283"/>
        <end position="290"/>
    </location>
</feature>
<feature type="strand" evidence="8">
    <location>
        <begin position="295"/>
        <end position="297"/>
    </location>
</feature>
<feature type="strand" evidence="8">
    <location>
        <begin position="299"/>
        <end position="308"/>
    </location>
</feature>
<feature type="strand" evidence="8">
    <location>
        <begin position="311"/>
        <end position="314"/>
    </location>
</feature>
<feature type="helix" evidence="8">
    <location>
        <begin position="317"/>
        <end position="319"/>
    </location>
</feature>
<feature type="turn" evidence="7">
    <location>
        <begin position="320"/>
        <end position="322"/>
    </location>
</feature>
<feature type="helix" evidence="8">
    <location>
        <begin position="324"/>
        <end position="329"/>
    </location>
</feature>
<feature type="strand" evidence="8">
    <location>
        <begin position="333"/>
        <end position="336"/>
    </location>
</feature>
<feature type="strand" evidence="8">
    <location>
        <begin position="342"/>
        <end position="344"/>
    </location>
</feature>
<feature type="strand" evidence="8">
    <location>
        <begin position="348"/>
        <end position="350"/>
    </location>
</feature>
<feature type="strand" evidence="8">
    <location>
        <begin position="355"/>
        <end position="362"/>
    </location>
</feature>
<feature type="strand" evidence="8">
    <location>
        <begin position="369"/>
        <end position="374"/>
    </location>
</feature>
<reference key="1">
    <citation type="journal article" date="2005" name="Science">
        <title>The genome of the African trypanosome Trypanosoma brucei.</title>
        <authorList>
            <person name="Berriman M."/>
            <person name="Ghedin E."/>
            <person name="Hertz-Fowler C."/>
            <person name="Blandin G."/>
            <person name="Renauld H."/>
            <person name="Bartholomeu D.C."/>
            <person name="Lennard N.J."/>
            <person name="Caler E."/>
            <person name="Hamlin N.E."/>
            <person name="Haas B."/>
            <person name="Bohme U."/>
            <person name="Hannick L."/>
            <person name="Aslett M.A."/>
            <person name="Shallom J."/>
            <person name="Marcello L."/>
            <person name="Hou L."/>
            <person name="Wickstead B."/>
            <person name="Alsmark U.C.M."/>
            <person name="Arrowsmith C."/>
            <person name="Atkin R.J."/>
            <person name="Barron A.J."/>
            <person name="Bringaud F."/>
            <person name="Brooks K."/>
            <person name="Carrington M."/>
            <person name="Cherevach I."/>
            <person name="Chillingworth T.J."/>
            <person name="Churcher C."/>
            <person name="Clark L.N."/>
            <person name="Corton C.H."/>
            <person name="Cronin A."/>
            <person name="Davies R.M."/>
            <person name="Doggett J."/>
            <person name="Djikeng A."/>
            <person name="Feldblyum T."/>
            <person name="Field M.C."/>
            <person name="Fraser A."/>
            <person name="Goodhead I."/>
            <person name="Hance Z."/>
            <person name="Harper D."/>
            <person name="Harris B.R."/>
            <person name="Hauser H."/>
            <person name="Hostetler J."/>
            <person name="Ivens A."/>
            <person name="Jagels K."/>
            <person name="Johnson D."/>
            <person name="Johnson J."/>
            <person name="Jones K."/>
            <person name="Kerhornou A.X."/>
            <person name="Koo H."/>
            <person name="Larke N."/>
            <person name="Landfear S."/>
            <person name="Larkin C."/>
            <person name="Leech V."/>
            <person name="Line A."/>
            <person name="Lord A."/>
            <person name="Macleod A."/>
            <person name="Mooney P.J."/>
            <person name="Moule S."/>
            <person name="Martin D.M."/>
            <person name="Morgan G.W."/>
            <person name="Mungall K."/>
            <person name="Norbertczak H."/>
            <person name="Ormond D."/>
            <person name="Pai G."/>
            <person name="Peacock C.S."/>
            <person name="Peterson J."/>
            <person name="Quail M.A."/>
            <person name="Rabbinowitsch E."/>
            <person name="Rajandream M.A."/>
            <person name="Reitter C."/>
            <person name="Salzberg S.L."/>
            <person name="Sanders M."/>
            <person name="Schobel S."/>
            <person name="Sharp S."/>
            <person name="Simmonds M."/>
            <person name="Simpson A.J."/>
            <person name="Tallon L."/>
            <person name="Turner C.M."/>
            <person name="Tait A."/>
            <person name="Tivey A.R."/>
            <person name="Van Aken S."/>
            <person name="Walker D."/>
            <person name="Wanless D."/>
            <person name="Wang S."/>
            <person name="White B."/>
            <person name="White O."/>
            <person name="Whitehead S."/>
            <person name="Woodward J."/>
            <person name="Wortman J."/>
            <person name="Adams M.D."/>
            <person name="Embley T.M."/>
            <person name="Gull K."/>
            <person name="Ullu E."/>
            <person name="Barry J.D."/>
            <person name="Fairlamb A.H."/>
            <person name="Opperdoes F."/>
            <person name="Barrell B.G."/>
            <person name="Donelson J.E."/>
            <person name="Hall N."/>
            <person name="Fraser C.M."/>
            <person name="Melville S.E."/>
            <person name="El-Sayed N.M.A."/>
        </authorList>
    </citation>
    <scope>NUCLEOTIDE SEQUENCE [LARGE SCALE GENOMIC DNA]</scope>
    <source>
        <strain evidence="6">927/4 GUTat10.1</strain>
    </source>
</reference>
<reference key="2">
    <citation type="journal article" date="2009" name="J. Biol. Chem.">
        <title>A type III protein arginine methyltransferase from the protozoan parasite Trypanosoma brucei.</title>
        <authorList>
            <person name="Fisk J.C."/>
            <person name="Sayegh J."/>
            <person name="Zurita-Lopez C."/>
            <person name="Menon S."/>
            <person name="Presnyak V."/>
            <person name="Clarke S.G."/>
            <person name="Read L.K."/>
        </authorList>
    </citation>
    <scope>FUNCTION</scope>
    <scope>SUBUNIT</scope>
    <scope>SUBCELLULAR LOCATION</scope>
    <scope>DEVELOPMENTAL STAGE</scope>
</reference>
<evidence type="ECO:0000250" key="1"/>
<evidence type="ECO:0000255" key="2">
    <source>
        <dbReference type="PROSITE-ProRule" id="PRU01015"/>
    </source>
</evidence>
<evidence type="ECO:0000256" key="3">
    <source>
        <dbReference type="SAM" id="MobiDB-lite"/>
    </source>
</evidence>
<evidence type="ECO:0000269" key="4">
    <source>
    </source>
</evidence>
<evidence type="ECO:0000305" key="5"/>
<evidence type="ECO:0000312" key="6">
    <source>
        <dbReference type="Proteomes" id="UP000008524"/>
    </source>
</evidence>
<evidence type="ECO:0007829" key="7">
    <source>
        <dbReference type="PDB" id="4M36"/>
    </source>
</evidence>
<evidence type="ECO:0007829" key="8">
    <source>
        <dbReference type="PDB" id="4M37"/>
    </source>
</evidence>
<accession>Q582G4</accession>
<gene>
    <name type="primary">PRMT7</name>
    <name type="ORF">Tb927.7.5490</name>
</gene>
<keyword id="KW-0002">3D-structure</keyword>
<keyword id="KW-0963">Cytoplasm</keyword>
<keyword id="KW-0489">Methyltransferase</keyword>
<keyword id="KW-1185">Reference proteome</keyword>
<keyword id="KW-0949">S-adenosyl-L-methionine</keyword>
<keyword id="KW-0808">Transferase</keyword>
<protein>
    <recommendedName>
        <fullName>Protein arginine N-methyltransferase 7</fullName>
        <shortName>TbPRMT7</shortName>
        <ecNumber>2.1.1.-</ecNumber>
    </recommendedName>
</protein>
<name>ANM7_TRYB2</name>
<dbReference type="EC" id="2.1.1.-"/>
<dbReference type="EMBL" id="AC091553">
    <property type="protein sequence ID" value="AAX78867.1"/>
    <property type="molecule type" value="Genomic_DNA"/>
</dbReference>
<dbReference type="RefSeq" id="XP_846172.1">
    <property type="nucleotide sequence ID" value="XM_841079.1"/>
</dbReference>
<dbReference type="PDB" id="4M36">
    <property type="method" value="X-ray"/>
    <property type="resolution" value="2.04 A"/>
    <property type="chains" value="A=36-378"/>
</dbReference>
<dbReference type="PDB" id="4M37">
    <property type="method" value="X-ray"/>
    <property type="resolution" value="1.70 A"/>
    <property type="chains" value="A=36-378"/>
</dbReference>
<dbReference type="PDB" id="4M38">
    <property type="method" value="X-ray"/>
    <property type="resolution" value="2.20 A"/>
    <property type="chains" value="A/B=36-378"/>
</dbReference>
<dbReference type="PDBsum" id="4M36"/>
<dbReference type="PDBsum" id="4M37"/>
<dbReference type="PDBsum" id="4M38"/>
<dbReference type="SMR" id="Q582G4"/>
<dbReference type="DIP" id="DIP-60814N"/>
<dbReference type="IntAct" id="Q582G4">
    <property type="interactions" value="2"/>
</dbReference>
<dbReference type="STRING" id="185431.Q582G4"/>
<dbReference type="ChEMBL" id="CHEMBL4523949"/>
<dbReference type="PaxDb" id="5691-AAZ12613"/>
<dbReference type="GeneID" id="3658759"/>
<dbReference type="KEGG" id="tbr:Tb927.7.5490"/>
<dbReference type="VEuPathDB" id="TriTrypDB:Tb927.7.5490"/>
<dbReference type="eggNOG" id="KOG1501">
    <property type="taxonomic scope" value="Eukaryota"/>
</dbReference>
<dbReference type="InParanoid" id="Q582G4"/>
<dbReference type="OMA" id="AHAMLFY"/>
<dbReference type="OrthoDB" id="412876at2759"/>
<dbReference type="BRENDA" id="2.1.1.321">
    <property type="organism ID" value="6520"/>
</dbReference>
<dbReference type="EvolutionaryTrace" id="Q582G4"/>
<dbReference type="Proteomes" id="UP000008524">
    <property type="component" value="Chromosome 7"/>
</dbReference>
<dbReference type="GO" id="GO:0005737">
    <property type="term" value="C:cytoplasm"/>
    <property type="evidence" value="ECO:0000314"/>
    <property type="project" value="UniProtKB"/>
</dbReference>
<dbReference type="GO" id="GO:0032991">
    <property type="term" value="C:protein-containing complex"/>
    <property type="evidence" value="ECO:0000314"/>
    <property type="project" value="UniProtKB"/>
</dbReference>
<dbReference type="GO" id="GO:0016273">
    <property type="term" value="F:arginine N-methyltransferase activity"/>
    <property type="evidence" value="ECO:0000314"/>
    <property type="project" value="GeneDB"/>
</dbReference>
<dbReference type="GO" id="GO:0008469">
    <property type="term" value="F:histone arginine N-methyltransferase activity"/>
    <property type="evidence" value="ECO:0000304"/>
    <property type="project" value="UniProtKB"/>
</dbReference>
<dbReference type="GO" id="GO:0042054">
    <property type="term" value="F:histone methyltransferase activity"/>
    <property type="evidence" value="ECO:0000318"/>
    <property type="project" value="GO_Central"/>
</dbReference>
<dbReference type="GO" id="GO:0042802">
    <property type="term" value="F:identical protein binding"/>
    <property type="evidence" value="ECO:0000353"/>
    <property type="project" value="IntAct"/>
</dbReference>
<dbReference type="GO" id="GO:0016274">
    <property type="term" value="F:protein-arginine N-methyltransferase activity"/>
    <property type="evidence" value="ECO:0000266"/>
    <property type="project" value="GeneDB"/>
</dbReference>
<dbReference type="GO" id="GO:0035241">
    <property type="term" value="F:protein-arginine omega-N monomethyltransferase activity"/>
    <property type="evidence" value="ECO:0000314"/>
    <property type="project" value="UniProtKB"/>
</dbReference>
<dbReference type="GO" id="GO:0006338">
    <property type="term" value="P:chromatin remodeling"/>
    <property type="evidence" value="ECO:0000318"/>
    <property type="project" value="GO_Central"/>
</dbReference>
<dbReference type="GO" id="GO:0018216">
    <property type="term" value="P:peptidyl-arginine methylation"/>
    <property type="evidence" value="ECO:0000314"/>
    <property type="project" value="UniProtKB"/>
</dbReference>
<dbReference type="GO" id="GO:0035246">
    <property type="term" value="P:peptidyl-arginine N-methylation"/>
    <property type="evidence" value="ECO:0000266"/>
    <property type="project" value="GeneDB"/>
</dbReference>
<dbReference type="GO" id="GO:0006355">
    <property type="term" value="P:regulation of DNA-templated transcription"/>
    <property type="evidence" value="ECO:0000318"/>
    <property type="project" value="GO_Central"/>
</dbReference>
<dbReference type="CDD" id="cd02440">
    <property type="entry name" value="AdoMet_MTases"/>
    <property type="match status" value="1"/>
</dbReference>
<dbReference type="FunFam" id="2.70.160.11:FF:000027">
    <property type="entry name" value="Protein arginine N-methyltransferase 7"/>
    <property type="match status" value="1"/>
</dbReference>
<dbReference type="FunFam" id="3.40.50.150:FF:000433">
    <property type="entry name" value="Protein arginine N-methyltransferase 7"/>
    <property type="match status" value="1"/>
</dbReference>
<dbReference type="Gene3D" id="2.70.160.11">
    <property type="entry name" value="Hnrnp arginine n-methyltransferase1"/>
    <property type="match status" value="1"/>
</dbReference>
<dbReference type="Gene3D" id="3.40.50.150">
    <property type="entry name" value="Vaccinia Virus protein VP39"/>
    <property type="match status" value="1"/>
</dbReference>
<dbReference type="IDEAL" id="IID50227"/>
<dbReference type="InterPro" id="IPR025799">
    <property type="entry name" value="Arg_MeTrfase"/>
</dbReference>
<dbReference type="InterPro" id="IPR029063">
    <property type="entry name" value="SAM-dependent_MTases_sf"/>
</dbReference>
<dbReference type="PANTHER" id="PTHR11006">
    <property type="entry name" value="PROTEIN ARGININE N-METHYLTRANSFERASE"/>
    <property type="match status" value="1"/>
</dbReference>
<dbReference type="PANTHER" id="PTHR11006:SF4">
    <property type="entry name" value="PROTEIN ARGININE N-METHYLTRANSFERASE 7"/>
    <property type="match status" value="1"/>
</dbReference>
<dbReference type="Pfam" id="PF06325">
    <property type="entry name" value="PrmA"/>
    <property type="match status" value="1"/>
</dbReference>
<dbReference type="SUPFAM" id="SSF53335">
    <property type="entry name" value="S-adenosyl-L-methionine-dependent methyltransferases"/>
    <property type="match status" value="1"/>
</dbReference>
<dbReference type="PROSITE" id="PS51678">
    <property type="entry name" value="SAM_MT_PRMT"/>
    <property type="match status" value="1"/>
</dbReference>
<sequence length="390" mass="44026">MPPKQHRHQKKDKNDNALQNTIGFVPPGATLASVSGYRPPDAFVNRIDRNIPVPARLRHTPVSLIEAVNDFHYAMMNDEERNNFYYEVLKKHVTPETGVLEIGAGSGLLSLMAAKLGAKWVVAVEGSEELAKLARENIRANNMEHQVKVLHMMSTELKSKHLPEPPDVLLSEIFGTMMLGESALDYVVDVRNRLLKPTTKIIPQFGTQYAVPIECDALHRISSVSGWRDLDLKHMMTLQDTVSIVFAKHYGIRMNSVNFRRLSDPIELFRVDFSSSNRNDIPRRKHFDVVAKESGTAHAMLFYWKVTDDEFVMSTDPEDTVNNFPRDMQWGQALQLLDASNGPLPTPVVFTEGKNYNFECNFSGDRVILHMQLCPESGNGEMTECEGKTT</sequence>
<proteinExistence type="evidence at protein level"/>
<organism>
    <name type="scientific">Trypanosoma brucei brucei (strain 927/4 GUTat10.1)</name>
    <dbReference type="NCBI Taxonomy" id="185431"/>
    <lineage>
        <taxon>Eukaryota</taxon>
        <taxon>Discoba</taxon>
        <taxon>Euglenozoa</taxon>
        <taxon>Kinetoplastea</taxon>
        <taxon>Metakinetoplastina</taxon>
        <taxon>Trypanosomatida</taxon>
        <taxon>Trypanosomatidae</taxon>
        <taxon>Trypanosoma</taxon>
    </lineage>
</organism>